<evidence type="ECO:0000255" key="1">
    <source>
        <dbReference type="HAMAP-Rule" id="MF_00123"/>
    </source>
</evidence>
<gene>
    <name evidence="1" type="primary">argS</name>
    <name type="ordered locus">YPA_1428</name>
</gene>
<comment type="catalytic activity">
    <reaction evidence="1">
        <text>tRNA(Arg) + L-arginine + ATP = L-arginyl-tRNA(Arg) + AMP + diphosphate</text>
        <dbReference type="Rhea" id="RHEA:20301"/>
        <dbReference type="Rhea" id="RHEA-COMP:9658"/>
        <dbReference type="Rhea" id="RHEA-COMP:9673"/>
        <dbReference type="ChEBI" id="CHEBI:30616"/>
        <dbReference type="ChEBI" id="CHEBI:32682"/>
        <dbReference type="ChEBI" id="CHEBI:33019"/>
        <dbReference type="ChEBI" id="CHEBI:78442"/>
        <dbReference type="ChEBI" id="CHEBI:78513"/>
        <dbReference type="ChEBI" id="CHEBI:456215"/>
        <dbReference type="EC" id="6.1.1.19"/>
    </reaction>
</comment>
<comment type="subunit">
    <text evidence="1">Monomer.</text>
</comment>
<comment type="subcellular location">
    <subcellularLocation>
        <location evidence="1">Cytoplasm</location>
    </subcellularLocation>
</comment>
<comment type="similarity">
    <text evidence="1">Belongs to the class-I aminoacyl-tRNA synthetase family.</text>
</comment>
<sequence length="576" mass="64142">MNIQALLSDKVSQALIAAGAPADCEAQVRQSAKAQFGDYQANGVMAVAKKLGMQPRQLAERVVELLDLTGIASKIEIAGPGFINIFLDRQWVAEKVEYALTAPKLGVAPVEPQTIVVDYSAPNVAKQMHVGHLRSTIIGDAAVRTLAFLGHNVIRANHVGDWGTQFGMLIAYLEKMQNENASDMGLSDLELFYQQAKKTYDEDEEFALRARAYVVKLQSGDEYCRQMWRKLVDITMAQNQVAYDRLNVTLTKDDVMGESLYNAMLPEIVADLKAKGLAVESEGATVVYLDEYKNKDGEPMGVIIQKKDGGYLYTTTDIACAKYRYETLGADRILYYIDSRQHQHLMQAWTIVRKAGYVPESVPLEHHMFGMMLGKDGKPFKTRSGGTVKLSDLLDEAVERAGKLIAEKNPDMPADELKQVINAVGIGAVKYADLSKSRTTDYIFDWDNMLALDGNTAPYMQYAYTRVVSVFRRAGVDETSLTLPLVVTEDREATLATRLLQFEEIITTVAREGTPHVMCSYLYDLAGLFSSFYEHCQILNAESEEIRQSRLKLAMLTAKTLKQGLDTLGIQTVERM</sequence>
<dbReference type="EC" id="6.1.1.19" evidence="1"/>
<dbReference type="EMBL" id="CP000308">
    <property type="protein sequence ID" value="ABG13395.1"/>
    <property type="molecule type" value="Genomic_DNA"/>
</dbReference>
<dbReference type="RefSeq" id="WP_002211212.1">
    <property type="nucleotide sequence ID" value="NZ_CP009906.1"/>
</dbReference>
<dbReference type="SMR" id="Q1C827"/>
<dbReference type="GeneID" id="57976615"/>
<dbReference type="KEGG" id="ypa:YPA_1428"/>
<dbReference type="Proteomes" id="UP000001971">
    <property type="component" value="Chromosome"/>
</dbReference>
<dbReference type="GO" id="GO:0005737">
    <property type="term" value="C:cytoplasm"/>
    <property type="evidence" value="ECO:0007669"/>
    <property type="project" value="UniProtKB-SubCell"/>
</dbReference>
<dbReference type="GO" id="GO:0004814">
    <property type="term" value="F:arginine-tRNA ligase activity"/>
    <property type="evidence" value="ECO:0007669"/>
    <property type="project" value="UniProtKB-UniRule"/>
</dbReference>
<dbReference type="GO" id="GO:0005524">
    <property type="term" value="F:ATP binding"/>
    <property type="evidence" value="ECO:0007669"/>
    <property type="project" value="UniProtKB-UniRule"/>
</dbReference>
<dbReference type="GO" id="GO:0006420">
    <property type="term" value="P:arginyl-tRNA aminoacylation"/>
    <property type="evidence" value="ECO:0007669"/>
    <property type="project" value="UniProtKB-UniRule"/>
</dbReference>
<dbReference type="CDD" id="cd07956">
    <property type="entry name" value="Anticodon_Ia_Arg"/>
    <property type="match status" value="1"/>
</dbReference>
<dbReference type="CDD" id="cd00671">
    <property type="entry name" value="ArgRS_core"/>
    <property type="match status" value="1"/>
</dbReference>
<dbReference type="FunFam" id="1.10.730.10:FF:000001">
    <property type="entry name" value="Arginine--tRNA ligase"/>
    <property type="match status" value="1"/>
</dbReference>
<dbReference type="FunFam" id="3.30.1360.70:FF:000001">
    <property type="entry name" value="Arginine--tRNA ligase"/>
    <property type="match status" value="1"/>
</dbReference>
<dbReference type="FunFam" id="3.40.50.620:FF:000030">
    <property type="entry name" value="Arginine--tRNA ligase"/>
    <property type="match status" value="1"/>
</dbReference>
<dbReference type="Gene3D" id="3.30.1360.70">
    <property type="entry name" value="Arginyl tRNA synthetase N-terminal domain"/>
    <property type="match status" value="1"/>
</dbReference>
<dbReference type="Gene3D" id="3.40.50.620">
    <property type="entry name" value="HUPs"/>
    <property type="match status" value="1"/>
</dbReference>
<dbReference type="Gene3D" id="1.10.730.10">
    <property type="entry name" value="Isoleucyl-tRNA Synthetase, Domain 1"/>
    <property type="match status" value="1"/>
</dbReference>
<dbReference type="HAMAP" id="MF_00123">
    <property type="entry name" value="Arg_tRNA_synth"/>
    <property type="match status" value="1"/>
</dbReference>
<dbReference type="InterPro" id="IPR001412">
    <property type="entry name" value="aa-tRNA-synth_I_CS"/>
</dbReference>
<dbReference type="InterPro" id="IPR001278">
    <property type="entry name" value="Arg-tRNA-ligase"/>
</dbReference>
<dbReference type="InterPro" id="IPR005148">
    <property type="entry name" value="Arg-tRNA-synth_N"/>
</dbReference>
<dbReference type="InterPro" id="IPR036695">
    <property type="entry name" value="Arg-tRNA-synth_N_sf"/>
</dbReference>
<dbReference type="InterPro" id="IPR035684">
    <property type="entry name" value="ArgRS_core"/>
</dbReference>
<dbReference type="InterPro" id="IPR008909">
    <property type="entry name" value="DALR_anticod-bd"/>
</dbReference>
<dbReference type="InterPro" id="IPR014729">
    <property type="entry name" value="Rossmann-like_a/b/a_fold"/>
</dbReference>
<dbReference type="InterPro" id="IPR009080">
    <property type="entry name" value="tRNAsynth_Ia_anticodon-bd"/>
</dbReference>
<dbReference type="NCBIfam" id="TIGR00456">
    <property type="entry name" value="argS"/>
    <property type="match status" value="1"/>
</dbReference>
<dbReference type="PANTHER" id="PTHR11956:SF5">
    <property type="entry name" value="ARGININE--TRNA LIGASE, CYTOPLASMIC"/>
    <property type="match status" value="1"/>
</dbReference>
<dbReference type="PANTHER" id="PTHR11956">
    <property type="entry name" value="ARGINYL-TRNA SYNTHETASE"/>
    <property type="match status" value="1"/>
</dbReference>
<dbReference type="Pfam" id="PF03485">
    <property type="entry name" value="Arg_tRNA_synt_N"/>
    <property type="match status" value="1"/>
</dbReference>
<dbReference type="Pfam" id="PF05746">
    <property type="entry name" value="DALR_1"/>
    <property type="match status" value="1"/>
</dbReference>
<dbReference type="Pfam" id="PF00750">
    <property type="entry name" value="tRNA-synt_1d"/>
    <property type="match status" value="1"/>
</dbReference>
<dbReference type="PRINTS" id="PR01038">
    <property type="entry name" value="TRNASYNTHARG"/>
</dbReference>
<dbReference type="SMART" id="SM01016">
    <property type="entry name" value="Arg_tRNA_synt_N"/>
    <property type="match status" value="1"/>
</dbReference>
<dbReference type="SMART" id="SM00836">
    <property type="entry name" value="DALR_1"/>
    <property type="match status" value="1"/>
</dbReference>
<dbReference type="SUPFAM" id="SSF47323">
    <property type="entry name" value="Anticodon-binding domain of a subclass of class I aminoacyl-tRNA synthetases"/>
    <property type="match status" value="1"/>
</dbReference>
<dbReference type="SUPFAM" id="SSF55190">
    <property type="entry name" value="Arginyl-tRNA synthetase (ArgRS), N-terminal 'additional' domain"/>
    <property type="match status" value="1"/>
</dbReference>
<dbReference type="SUPFAM" id="SSF52374">
    <property type="entry name" value="Nucleotidylyl transferase"/>
    <property type="match status" value="1"/>
</dbReference>
<dbReference type="PROSITE" id="PS00178">
    <property type="entry name" value="AA_TRNA_LIGASE_I"/>
    <property type="match status" value="1"/>
</dbReference>
<accession>Q1C827</accession>
<feature type="chain" id="PRO_1000018146" description="Arginine--tRNA ligase">
    <location>
        <begin position="1"/>
        <end position="576"/>
    </location>
</feature>
<feature type="short sequence motif" description="'HIGH' region">
    <location>
        <begin position="122"/>
        <end position="132"/>
    </location>
</feature>
<protein>
    <recommendedName>
        <fullName evidence="1">Arginine--tRNA ligase</fullName>
        <ecNumber evidence="1">6.1.1.19</ecNumber>
    </recommendedName>
    <alternativeName>
        <fullName evidence="1">Arginyl-tRNA synthetase</fullName>
        <shortName evidence="1">ArgRS</shortName>
    </alternativeName>
</protein>
<name>SYR_YERPA</name>
<reference key="1">
    <citation type="journal article" date="2006" name="J. Bacteriol.">
        <title>Complete genome sequence of Yersinia pestis strains Antiqua and Nepal516: evidence of gene reduction in an emerging pathogen.</title>
        <authorList>
            <person name="Chain P.S.G."/>
            <person name="Hu P."/>
            <person name="Malfatti S.A."/>
            <person name="Radnedge L."/>
            <person name="Larimer F."/>
            <person name="Vergez L.M."/>
            <person name="Worsham P."/>
            <person name="Chu M.C."/>
            <person name="Andersen G.L."/>
        </authorList>
    </citation>
    <scope>NUCLEOTIDE SEQUENCE [LARGE SCALE GENOMIC DNA]</scope>
    <source>
        <strain>Antiqua</strain>
    </source>
</reference>
<organism>
    <name type="scientific">Yersinia pestis bv. Antiqua (strain Antiqua)</name>
    <dbReference type="NCBI Taxonomy" id="360102"/>
    <lineage>
        <taxon>Bacteria</taxon>
        <taxon>Pseudomonadati</taxon>
        <taxon>Pseudomonadota</taxon>
        <taxon>Gammaproteobacteria</taxon>
        <taxon>Enterobacterales</taxon>
        <taxon>Yersiniaceae</taxon>
        <taxon>Yersinia</taxon>
    </lineage>
</organism>
<proteinExistence type="inferred from homology"/>
<keyword id="KW-0030">Aminoacyl-tRNA synthetase</keyword>
<keyword id="KW-0067">ATP-binding</keyword>
<keyword id="KW-0963">Cytoplasm</keyword>
<keyword id="KW-0436">Ligase</keyword>
<keyword id="KW-0547">Nucleotide-binding</keyword>
<keyword id="KW-0648">Protein biosynthesis</keyword>